<feature type="chain" id="PRO_0000280113" description="Microtubule cross-linking factor 1">
    <location>
        <begin position="1"/>
        <end position="1905"/>
    </location>
</feature>
<feature type="region of interest" description="Necessary for self-assembly, microtubule bundling activity and apicobasal microtubule organization" evidence="1">
    <location>
        <begin position="1"/>
        <end position="508"/>
    </location>
</feature>
<feature type="region of interest" description="Disordered" evidence="4">
    <location>
        <begin position="1"/>
        <end position="329"/>
    </location>
</feature>
<feature type="region of interest" description="Necessary for colocalization and binding with microtubules" evidence="1">
    <location>
        <begin position="1"/>
        <end position="249"/>
    </location>
</feature>
<feature type="region of interest" description="Disordered" evidence="4">
    <location>
        <begin position="544"/>
        <end position="563"/>
    </location>
</feature>
<feature type="region of interest" description="Disordered" evidence="4">
    <location>
        <begin position="601"/>
        <end position="631"/>
    </location>
</feature>
<feature type="region of interest" description="Disordered" evidence="4">
    <location>
        <begin position="671"/>
        <end position="694"/>
    </location>
</feature>
<feature type="region of interest" description="Disordered" evidence="4">
    <location>
        <begin position="737"/>
        <end position="800"/>
    </location>
</feature>
<feature type="region of interest" description="Disordered" evidence="4">
    <location>
        <begin position="842"/>
        <end position="867"/>
    </location>
</feature>
<feature type="region of interest" description="Disordered" evidence="4">
    <location>
        <begin position="1080"/>
        <end position="1100"/>
    </location>
</feature>
<feature type="region of interest" description="Necessary for interaction with MARK2 and apicobasal microtubule bundle formation in polarized epithelial cells" evidence="6">
    <location>
        <begin position="1265"/>
        <end position="1382"/>
    </location>
</feature>
<feature type="region of interest" description="Disordered" evidence="4">
    <location>
        <begin position="1346"/>
        <end position="1384"/>
    </location>
</feature>
<feature type="region of interest" description="Disordered" evidence="4">
    <location>
        <begin position="1485"/>
        <end position="1505"/>
    </location>
</feature>
<feature type="region of interest" description="Disordered" evidence="4">
    <location>
        <begin position="1524"/>
        <end position="1569"/>
    </location>
</feature>
<feature type="region of interest" description="Disordered" evidence="4">
    <location>
        <begin position="1655"/>
        <end position="1689"/>
    </location>
</feature>
<feature type="region of interest" description="Necessary for colocalization and binding with microtubules">
    <location>
        <begin position="1678"/>
        <end position="1773"/>
    </location>
</feature>
<feature type="region of interest" description="Disordered" evidence="4">
    <location>
        <begin position="1707"/>
        <end position="1756"/>
    </location>
</feature>
<feature type="region of interest" description="Disordered" evidence="4">
    <location>
        <begin position="1782"/>
        <end position="1842"/>
    </location>
</feature>
<feature type="region of interest" description="Disordered" evidence="4">
    <location>
        <begin position="1863"/>
        <end position="1905"/>
    </location>
</feature>
<feature type="coiled-coil region" evidence="3">
    <location>
        <begin position="330"/>
        <end position="404"/>
    </location>
</feature>
<feature type="coiled-coil region" evidence="3">
    <location>
        <begin position="432"/>
        <end position="483"/>
    </location>
</feature>
<feature type="coiled-coil region" evidence="3">
    <location>
        <begin position="513"/>
        <end position="718"/>
    </location>
</feature>
<feature type="coiled-coil region" evidence="3">
    <location>
        <begin position="1143"/>
        <end position="1201"/>
    </location>
</feature>
<feature type="coiled-coil region" evidence="3">
    <location>
        <begin position="1238"/>
        <end position="1278"/>
    </location>
</feature>
<feature type="compositionally biased region" description="Basic residues" evidence="4">
    <location>
        <begin position="22"/>
        <end position="40"/>
    </location>
</feature>
<feature type="compositionally biased region" description="Low complexity" evidence="4">
    <location>
        <begin position="63"/>
        <end position="95"/>
    </location>
</feature>
<feature type="compositionally biased region" description="Low complexity" evidence="4">
    <location>
        <begin position="115"/>
        <end position="130"/>
    </location>
</feature>
<feature type="compositionally biased region" description="Low complexity" evidence="4">
    <location>
        <begin position="268"/>
        <end position="283"/>
    </location>
</feature>
<feature type="compositionally biased region" description="Basic and acidic residues" evidence="4">
    <location>
        <begin position="601"/>
        <end position="616"/>
    </location>
</feature>
<feature type="compositionally biased region" description="Gly residues" evidence="4">
    <location>
        <begin position="680"/>
        <end position="692"/>
    </location>
</feature>
<feature type="compositionally biased region" description="Basic and acidic residues" evidence="4">
    <location>
        <begin position="741"/>
        <end position="770"/>
    </location>
</feature>
<feature type="compositionally biased region" description="Acidic residues" evidence="4">
    <location>
        <begin position="857"/>
        <end position="866"/>
    </location>
</feature>
<feature type="compositionally biased region" description="Basic and acidic residues" evidence="4">
    <location>
        <begin position="1356"/>
        <end position="1377"/>
    </location>
</feature>
<feature type="compositionally biased region" description="Low complexity" evidence="4">
    <location>
        <begin position="1678"/>
        <end position="1687"/>
    </location>
</feature>
<feature type="compositionally biased region" description="Polar residues" evidence="4">
    <location>
        <begin position="1744"/>
        <end position="1756"/>
    </location>
</feature>
<feature type="modified residue" description="Phosphoserine" evidence="17 18">
    <location>
        <position position="77"/>
    </location>
</feature>
<feature type="modified residue" description="Phosphoserine" evidence="18">
    <location>
        <position position="87"/>
    </location>
</feature>
<feature type="modified residue" description="Phosphoserine" evidence="2">
    <location>
        <position position="217"/>
    </location>
</feature>
<feature type="modified residue" description="Phosphoserine" evidence="2">
    <location>
        <position position="221"/>
    </location>
</feature>
<feature type="modified residue" description="Phosphoserine" evidence="17 18">
    <location>
        <position position="263"/>
    </location>
</feature>
<feature type="modified residue" description="Phosphoserine" evidence="14 15 16 18">
    <location>
        <position position="549"/>
    </location>
</feature>
<feature type="modified residue" description="Phosphoserine" evidence="14">
    <location>
        <position position="618"/>
    </location>
</feature>
<feature type="modified residue" description="Phosphothreonine" evidence="14">
    <location>
        <position position="621"/>
    </location>
</feature>
<feature type="modified residue" description="Phosphoserine" evidence="17">
    <location>
        <position position="685"/>
    </location>
</feature>
<feature type="modified residue" description="Phosphoserine" evidence="14 17 18">
    <location>
        <position position="776"/>
    </location>
</feature>
<feature type="modified residue" description="Phosphoserine" evidence="14">
    <location>
        <position position="901"/>
    </location>
</feature>
<feature type="modified residue" description="Phosphoserine" evidence="14">
    <location>
        <position position="923"/>
    </location>
</feature>
<feature type="modified residue" description="Phosphoserine" evidence="18">
    <location>
        <position position="1278"/>
    </location>
</feature>
<feature type="modified residue" description="Phosphoserine" evidence="14 18">
    <location>
        <position position="1385"/>
    </location>
</feature>
<feature type="modified residue" description="Phosphoserine" evidence="14">
    <location>
        <position position="1388"/>
    </location>
</feature>
<feature type="modified residue" description="Phosphoserine" evidence="17">
    <location>
        <position position="1399"/>
    </location>
</feature>
<feature type="modified residue" description="Phosphothreonine" evidence="13 14">
    <location>
        <position position="1417"/>
    </location>
</feature>
<feature type="modified residue" description="Phosphoserine" evidence="13 14">
    <location>
        <position position="1421"/>
    </location>
</feature>
<feature type="modified residue" description="Phosphotyrosine" evidence="14">
    <location>
        <position position="1427"/>
    </location>
</feature>
<feature type="modified residue" description="Phosphoserine" evidence="18">
    <location>
        <position position="1514"/>
    </location>
</feature>
<feature type="modified residue" description="Phosphoserine" evidence="18">
    <location>
        <position position="1523"/>
    </location>
</feature>
<feature type="modified residue" description="Phosphoserine" evidence="14">
    <location>
        <position position="1561"/>
    </location>
</feature>
<feature type="modified residue" description="Phosphoserine" evidence="14">
    <location>
        <position position="1578"/>
    </location>
</feature>
<feature type="modified residue" description="Phosphoserine" evidence="14">
    <location>
        <position position="1583"/>
    </location>
</feature>
<feature type="modified residue" description="Phosphoserine" evidence="14">
    <location>
        <position position="1592"/>
    </location>
</feature>
<feature type="modified residue" description="Phosphoserine" evidence="14">
    <location>
        <position position="1661"/>
    </location>
</feature>
<feature type="modified residue" description="Phosphothreonine" evidence="14">
    <location>
        <position position="1667"/>
    </location>
</feature>
<feature type="modified residue" description="Phosphothreonine" evidence="13 14">
    <location>
        <position position="1675"/>
    </location>
</feature>
<feature type="modified residue" description="Phosphoserine" evidence="13">
    <location>
        <position position="1679"/>
    </location>
</feature>
<feature type="modified residue" description="Phosphoserine" evidence="14">
    <location>
        <position position="1683"/>
    </location>
</feature>
<feature type="modified residue" description="Phosphoserine" evidence="18">
    <location>
        <position position="1791"/>
    </location>
</feature>
<feature type="modified residue" description="Phosphoserine" evidence="18">
    <location>
        <position position="1808"/>
    </location>
</feature>
<feature type="modified residue" description="Phosphoserine" evidence="14">
    <location>
        <position position="1812"/>
    </location>
</feature>
<feature type="modified residue" description="Phosphoserine" evidence="14">
    <location>
        <position position="1814"/>
    </location>
</feature>
<feature type="splice variant" id="VSP_023549" description="In isoform 4." evidence="10">
    <location>
        <begin position="1"/>
        <end position="1004"/>
    </location>
</feature>
<feature type="splice variant" id="VSP_023550" description="In isoform 2 and isoform 3." evidence="9 11">
    <location>
        <begin position="1"/>
        <end position="360"/>
    </location>
</feature>
<feature type="splice variant" id="VSP_023551" description="In isoform 3." evidence="9">
    <original>E</original>
    <variation>ELRGPPVLPEQSVSIEELQGQLVQAARLHQEETETFTNKIHK</variation>
    <location>
        <position position="989"/>
    </location>
</feature>
<feature type="splice variant" id="VSP_023552" description="In isoform 4." evidence="10">
    <original>Q</original>
    <variation>QNCCGYPRINIEEETLGFTRLPAGSTVKTLKSLGLQRLE</variation>
    <location>
        <position position="1187"/>
    </location>
</feature>
<feature type="splice variant" id="VSP_023553" description="In isoform 4." evidence="10">
    <location>
        <begin position="1273"/>
        <end position="1300"/>
    </location>
</feature>
<feature type="splice variant" id="VSP_023554" description="In isoform 4." evidence="10">
    <original>NQTVLLTAPWGL</original>
    <variation>ELPCSALAPSLEPCFSRPERPANRRPPSRWAPHSPTASQPQSPGDPTSLEEHGGEEPPEEQPHRDASLHGLSQYNSL</variation>
    <location>
        <begin position="1894"/>
        <end position="1905"/>
    </location>
</feature>
<feature type="sequence variant" id="VAR_055942" description="In dbSNP:rs35739383.">
    <original>M</original>
    <variation>T</variation>
    <location>
        <position position="602"/>
    </location>
</feature>
<feature type="sequence variant" id="VAR_031073" description="In dbSNP:rs1965665." evidence="8">
    <original>Q</original>
    <variation>R</variation>
    <location>
        <position position="861"/>
    </location>
</feature>
<feature type="sequence variant" id="VAR_031074" description="In dbSNP:rs3744979." evidence="5 14">
    <original>D</original>
    <variation>G</variation>
    <location>
        <position position="898"/>
    </location>
</feature>
<feature type="sequence variant" id="VAR_031075" description="In dbSNP:rs12386117." evidence="8">
    <original>G</original>
    <variation>S</variation>
    <location>
        <position position="1097"/>
    </location>
</feature>
<feature type="sequence variant" id="VAR_031076" description="In dbSNP:rs11874468.">
    <original>K</original>
    <variation>Q</variation>
    <location>
        <position position="1211"/>
    </location>
</feature>
<feature type="modified residue" description="Phosphoserine" evidence="14">
    <location sequence="Q9Y4B5-4">
        <position position="941"/>
    </location>
</feature>
<feature type="modified residue" description="Phosphoserine" evidence="14 17">
    <location sequence="Q9Y4B5-4">
        <position position="975"/>
    </location>
</feature>
<accession>Q9Y4B5</accession>
<accession>E9PAY7</accession>
<accession>Q6ZMQ9</accession>
<accession>Q8IWA9</accession>
<reference key="1">
    <citation type="journal article" date="1998" name="DNA Res.">
        <title>Prediction of the coding sequences of unidentified human genes. XI. The complete sequences of 100 new cDNA clones from brain which code for large proteins in vitro.</title>
        <authorList>
            <person name="Nagase T."/>
            <person name="Ishikawa K."/>
            <person name="Suyama M."/>
            <person name="Kikuno R."/>
            <person name="Miyajima N."/>
            <person name="Tanaka A."/>
            <person name="Kotani H."/>
            <person name="Nomura N."/>
            <person name="Ohara O."/>
        </authorList>
    </citation>
    <scope>NUCLEOTIDE SEQUENCE [LARGE SCALE MRNA] (ISOFORM 2)</scope>
    <scope>VARIANTS ARG-861 AND SER-1097</scope>
    <source>
        <tissue>Brain</tissue>
    </source>
</reference>
<reference key="2">
    <citation type="submission" date="2005-01" db="EMBL/GenBank/DDBJ databases">
        <authorList>
            <person name="Ohara O."/>
            <person name="Suyama M."/>
            <person name="Nagase T."/>
            <person name="Ishikawa K."/>
            <person name="Kikuno R."/>
        </authorList>
    </citation>
    <scope>SEQUENCE REVISION</scope>
</reference>
<reference key="3">
    <citation type="journal article" date="2004" name="Nat. Genet.">
        <title>Complete sequencing and characterization of 21,243 full-length human cDNAs.</title>
        <authorList>
            <person name="Ota T."/>
            <person name="Suzuki Y."/>
            <person name="Nishikawa T."/>
            <person name="Otsuki T."/>
            <person name="Sugiyama T."/>
            <person name="Irie R."/>
            <person name="Wakamatsu A."/>
            <person name="Hayashi K."/>
            <person name="Sato H."/>
            <person name="Nagai K."/>
            <person name="Kimura K."/>
            <person name="Makita H."/>
            <person name="Sekine M."/>
            <person name="Obayashi M."/>
            <person name="Nishi T."/>
            <person name="Shibahara T."/>
            <person name="Tanaka T."/>
            <person name="Ishii S."/>
            <person name="Yamamoto J."/>
            <person name="Saito K."/>
            <person name="Kawai Y."/>
            <person name="Isono Y."/>
            <person name="Nakamura Y."/>
            <person name="Nagahari K."/>
            <person name="Murakami K."/>
            <person name="Yasuda T."/>
            <person name="Iwayanagi T."/>
            <person name="Wagatsuma M."/>
            <person name="Shiratori A."/>
            <person name="Sudo H."/>
            <person name="Hosoiri T."/>
            <person name="Kaku Y."/>
            <person name="Kodaira H."/>
            <person name="Kondo H."/>
            <person name="Sugawara M."/>
            <person name="Takahashi M."/>
            <person name="Kanda K."/>
            <person name="Yokoi T."/>
            <person name="Furuya T."/>
            <person name="Kikkawa E."/>
            <person name="Omura Y."/>
            <person name="Abe K."/>
            <person name="Kamihara K."/>
            <person name="Katsuta N."/>
            <person name="Sato K."/>
            <person name="Tanikawa M."/>
            <person name="Yamazaki M."/>
            <person name="Ninomiya K."/>
            <person name="Ishibashi T."/>
            <person name="Yamashita H."/>
            <person name="Murakawa K."/>
            <person name="Fujimori K."/>
            <person name="Tanai H."/>
            <person name="Kimata M."/>
            <person name="Watanabe M."/>
            <person name="Hiraoka S."/>
            <person name="Chiba Y."/>
            <person name="Ishida S."/>
            <person name="Ono Y."/>
            <person name="Takiguchi S."/>
            <person name="Watanabe S."/>
            <person name="Yosida M."/>
            <person name="Hotuta T."/>
            <person name="Kusano J."/>
            <person name="Kanehori K."/>
            <person name="Takahashi-Fujii A."/>
            <person name="Hara H."/>
            <person name="Tanase T.-O."/>
            <person name="Nomura Y."/>
            <person name="Togiya S."/>
            <person name="Komai F."/>
            <person name="Hara R."/>
            <person name="Takeuchi K."/>
            <person name="Arita M."/>
            <person name="Imose N."/>
            <person name="Musashino K."/>
            <person name="Yuuki H."/>
            <person name="Oshima A."/>
            <person name="Sasaki N."/>
            <person name="Aotsuka S."/>
            <person name="Yoshikawa Y."/>
            <person name="Matsunawa H."/>
            <person name="Ichihara T."/>
            <person name="Shiohata N."/>
            <person name="Sano S."/>
            <person name="Moriya S."/>
            <person name="Momiyama H."/>
            <person name="Satoh N."/>
            <person name="Takami S."/>
            <person name="Terashima Y."/>
            <person name="Suzuki O."/>
            <person name="Nakagawa S."/>
            <person name="Senoh A."/>
            <person name="Mizoguchi H."/>
            <person name="Goto Y."/>
            <person name="Shimizu F."/>
            <person name="Wakebe H."/>
            <person name="Hishigaki H."/>
            <person name="Watanabe T."/>
            <person name="Sugiyama A."/>
            <person name="Takemoto M."/>
            <person name="Kawakami B."/>
            <person name="Yamazaki M."/>
            <person name="Watanabe K."/>
            <person name="Kumagai A."/>
            <person name="Itakura S."/>
            <person name="Fukuzumi Y."/>
            <person name="Fujimori Y."/>
            <person name="Komiyama M."/>
            <person name="Tashiro H."/>
            <person name="Tanigami A."/>
            <person name="Fujiwara T."/>
            <person name="Ono T."/>
            <person name="Yamada K."/>
            <person name="Fujii Y."/>
            <person name="Ozaki K."/>
            <person name="Hirao M."/>
            <person name="Ohmori Y."/>
            <person name="Kawabata A."/>
            <person name="Hikiji T."/>
            <person name="Kobatake N."/>
            <person name="Inagaki H."/>
            <person name="Ikema Y."/>
            <person name="Okamoto S."/>
            <person name="Okitani R."/>
            <person name="Kawakami T."/>
            <person name="Noguchi S."/>
            <person name="Itoh T."/>
            <person name="Shigeta K."/>
            <person name="Senba T."/>
            <person name="Matsumura K."/>
            <person name="Nakajima Y."/>
            <person name="Mizuno T."/>
            <person name="Morinaga M."/>
            <person name="Sasaki M."/>
            <person name="Togashi T."/>
            <person name="Oyama M."/>
            <person name="Hata H."/>
            <person name="Watanabe M."/>
            <person name="Komatsu T."/>
            <person name="Mizushima-Sugano J."/>
            <person name="Satoh T."/>
            <person name="Shirai Y."/>
            <person name="Takahashi Y."/>
            <person name="Nakagawa K."/>
            <person name="Okumura K."/>
            <person name="Nagase T."/>
            <person name="Nomura N."/>
            <person name="Kikuchi H."/>
            <person name="Masuho Y."/>
            <person name="Yamashita R."/>
            <person name="Nakai K."/>
            <person name="Yada T."/>
            <person name="Nakamura Y."/>
            <person name="Ohara O."/>
            <person name="Isogai T."/>
            <person name="Sugano S."/>
        </authorList>
    </citation>
    <scope>NUCLEOTIDE SEQUENCE [LARGE SCALE MRNA] (ISOFORM 3)</scope>
    <scope>VARIANT GLY-898</scope>
    <source>
        <tissue>Cerebellum</tissue>
    </source>
</reference>
<reference key="4">
    <citation type="journal article" date="2005" name="Nature">
        <title>DNA sequence and analysis of human chromosome 18.</title>
        <authorList>
            <person name="Nusbaum C."/>
            <person name="Zody M.C."/>
            <person name="Borowsky M.L."/>
            <person name="Kamal M."/>
            <person name="Kodira C.D."/>
            <person name="Taylor T.D."/>
            <person name="Whittaker C.A."/>
            <person name="Chang J.L."/>
            <person name="Cuomo C.A."/>
            <person name="Dewar K."/>
            <person name="FitzGerald M.G."/>
            <person name="Yang X."/>
            <person name="Abouelleil A."/>
            <person name="Allen N.R."/>
            <person name="Anderson S."/>
            <person name="Bloom T."/>
            <person name="Bugalter B."/>
            <person name="Butler J."/>
            <person name="Cook A."/>
            <person name="DeCaprio D."/>
            <person name="Engels R."/>
            <person name="Garber M."/>
            <person name="Gnirke A."/>
            <person name="Hafez N."/>
            <person name="Hall J.L."/>
            <person name="Norman C.H."/>
            <person name="Itoh T."/>
            <person name="Jaffe D.B."/>
            <person name="Kuroki Y."/>
            <person name="Lehoczky J."/>
            <person name="Lui A."/>
            <person name="Macdonald P."/>
            <person name="Mauceli E."/>
            <person name="Mikkelsen T.S."/>
            <person name="Naylor J.W."/>
            <person name="Nicol R."/>
            <person name="Nguyen C."/>
            <person name="Noguchi H."/>
            <person name="O'Leary S.B."/>
            <person name="Piqani B."/>
            <person name="Smith C.L."/>
            <person name="Talamas J.A."/>
            <person name="Topham K."/>
            <person name="Totoki Y."/>
            <person name="Toyoda A."/>
            <person name="Wain H.M."/>
            <person name="Young S.K."/>
            <person name="Zeng Q."/>
            <person name="Zimmer A.R."/>
            <person name="Fujiyama A."/>
            <person name="Hattori M."/>
            <person name="Birren B.W."/>
            <person name="Sakaki Y."/>
            <person name="Lander E.S."/>
        </authorList>
    </citation>
    <scope>NUCLEOTIDE SEQUENCE [LARGE SCALE GENOMIC DNA]</scope>
</reference>
<reference key="5">
    <citation type="journal article" date="2004" name="Genome Res.">
        <title>The status, quality, and expansion of the NIH full-length cDNA project: the Mammalian Gene Collection (MGC).</title>
        <authorList>
            <consortium name="The MGC Project Team"/>
        </authorList>
    </citation>
    <scope>NUCLEOTIDE SEQUENCE [LARGE SCALE MRNA] (ISOFORM 4)</scope>
    <source>
        <tissue>Testis</tissue>
    </source>
</reference>
<reference key="6">
    <citation type="journal article" date="2006" name="Cell">
        <title>Global, in vivo, and site-specific phosphorylation dynamics in signaling networks.</title>
        <authorList>
            <person name="Olsen J.V."/>
            <person name="Blagoev B."/>
            <person name="Gnad F."/>
            <person name="Macek B."/>
            <person name="Kumar C."/>
            <person name="Mortensen P."/>
            <person name="Mann M."/>
        </authorList>
    </citation>
    <scope>IDENTIFICATION BY MASS SPECTROMETRY [LARGE SCALE ANALYSIS]</scope>
    <source>
        <tissue>Cervix carcinoma</tissue>
    </source>
</reference>
<reference key="7">
    <citation type="journal article" date="2006" name="Nat. Biotechnol.">
        <title>A probability-based approach for high-throughput protein phosphorylation analysis and site localization.</title>
        <authorList>
            <person name="Beausoleil S.A."/>
            <person name="Villen J."/>
            <person name="Gerber S.A."/>
            <person name="Rush J."/>
            <person name="Gygi S.P."/>
        </authorList>
    </citation>
    <scope>PHOSPHORYLATION [LARGE SCALE ANALYSIS] AT THR-1417; SER-1421; THR-1675 AND SER-1679</scope>
    <scope>IDENTIFICATION BY MASS SPECTROMETRY [LARGE SCALE ANALYSIS]</scope>
    <source>
        <tissue>Cervix carcinoma</tissue>
    </source>
</reference>
<reference key="8">
    <citation type="journal article" date="2008" name="J. Proteome Res.">
        <title>Combining protein-based IMAC, peptide-based IMAC, and MudPIT for efficient phosphoproteomic analysis.</title>
        <authorList>
            <person name="Cantin G.T."/>
            <person name="Yi W."/>
            <person name="Lu B."/>
            <person name="Park S.K."/>
            <person name="Xu T."/>
            <person name="Lee J.-D."/>
            <person name="Yates J.R. III"/>
        </authorList>
    </citation>
    <scope>IDENTIFICATION BY MASS SPECTROMETRY [LARGE SCALE ANALYSIS]</scope>
    <source>
        <tissue>Cervix carcinoma</tissue>
    </source>
</reference>
<reference key="9">
    <citation type="journal article" date="2008" name="Proc. Natl. Acad. Sci. U.S.A.">
        <title>A quantitative atlas of mitotic phosphorylation.</title>
        <authorList>
            <person name="Dephoure N."/>
            <person name="Zhou C."/>
            <person name="Villen J."/>
            <person name="Beausoleil S.A."/>
            <person name="Bakalarski C.E."/>
            <person name="Elledge S.J."/>
            <person name="Gygi S.P."/>
        </authorList>
    </citation>
    <scope>PHOSPHORYLATION [LARGE SCALE ANALYSIS] AT SER-549; SER-618; THR-621; SER-776; SER-901; SER-923; SER-1385; SER-1388; THR-1417; SER-1421; TYR-1427; SER-1561; SER-1578; SER-1583; SER-1592; SER-1661; THR-1667; THR-1675; SER-1683; SER-1812 AND SER-1814</scope>
    <scope>PHOSPHORYLATION [LARGE SCALE ANALYSIS] AT SER-941 AND SER-975 (ISOFORM 4)</scope>
    <scope>VARIANT [LARGE SCALE ANALYSIS] GLY-898</scope>
    <scope>IDENTIFICATION BY MASS SPECTROMETRY [LARGE SCALE ANALYSIS]</scope>
    <source>
        <tissue>Cervix carcinoma</tissue>
    </source>
</reference>
<reference key="10">
    <citation type="journal article" date="2009" name="Mol. Cell. Proteomics">
        <title>Large-scale proteomics analysis of the human kinome.</title>
        <authorList>
            <person name="Oppermann F.S."/>
            <person name="Gnad F."/>
            <person name="Olsen J.V."/>
            <person name="Hornberger R."/>
            <person name="Greff Z."/>
            <person name="Keri G."/>
            <person name="Mann M."/>
            <person name="Daub H."/>
        </authorList>
    </citation>
    <scope>PHOSPHORYLATION [LARGE SCALE ANALYSIS] AT SER-549</scope>
    <scope>IDENTIFICATION BY MASS SPECTROMETRY [LARGE SCALE ANALYSIS]</scope>
</reference>
<reference key="11">
    <citation type="journal article" date="2009" name="Sci. Signal.">
        <title>Quantitative phosphoproteomic analysis of T cell receptor signaling reveals system-wide modulation of protein-protein interactions.</title>
        <authorList>
            <person name="Mayya V."/>
            <person name="Lundgren D.H."/>
            <person name="Hwang S.-I."/>
            <person name="Rezaul K."/>
            <person name="Wu L."/>
            <person name="Eng J.K."/>
            <person name="Rodionov V."/>
            <person name="Han D.K."/>
        </authorList>
    </citation>
    <scope>PHOSPHORYLATION [LARGE SCALE ANALYSIS] AT SER-549</scope>
    <scope>IDENTIFICATION BY MASS SPECTROMETRY [LARGE SCALE ANALYSIS]</scope>
    <source>
        <tissue>Leukemic T-cell</tissue>
    </source>
</reference>
<reference key="12">
    <citation type="journal article" date="2010" name="Sci. Signal.">
        <title>Quantitative phosphoproteomics reveals widespread full phosphorylation site occupancy during mitosis.</title>
        <authorList>
            <person name="Olsen J.V."/>
            <person name="Vermeulen M."/>
            <person name="Santamaria A."/>
            <person name="Kumar C."/>
            <person name="Miller M.L."/>
            <person name="Jensen L.J."/>
            <person name="Gnad F."/>
            <person name="Cox J."/>
            <person name="Jensen T.S."/>
            <person name="Nigg E.A."/>
            <person name="Brunak S."/>
            <person name="Mann M."/>
        </authorList>
    </citation>
    <scope>PHOSPHORYLATION [LARGE SCALE ANALYSIS] AT SER-77; SER-263; SER-685; SER-776 AND SER-1399</scope>
    <scope>PHOSPHORYLATION [LARGE SCALE ANALYSIS] AT SER-975 (ISOFORM 4)</scope>
    <scope>IDENTIFICATION BY MASS SPECTROMETRY [LARGE SCALE ANALYSIS]</scope>
    <source>
        <tissue>Cervix carcinoma</tissue>
    </source>
</reference>
<reference key="13">
    <citation type="journal article" date="2013" name="J. Cell Sci.">
        <title>The novel PAR-1-binding protein MTCL1 has crucial roles in organizing microtubules in polarizing epithelial cells.</title>
        <authorList>
            <person name="Sato Y."/>
            <person name="Akitsu M."/>
            <person name="Amano Y."/>
            <person name="Yamashita K."/>
            <person name="Ide M."/>
            <person name="Shimada K."/>
            <person name="Yamashita A."/>
            <person name="Hirano H."/>
            <person name="Arakawa N."/>
            <person name="Maki T."/>
            <person name="Hayashi I."/>
            <person name="Ohno S."/>
            <person name="Suzuki A."/>
        </authorList>
    </citation>
    <scope>FUNCTION</scope>
    <scope>SUBUNIT</scope>
    <scope>INTERACTION WITH MARK2</scope>
    <scope>ASSOCIATION WITH MICROTUBULES</scope>
    <scope>SUBCELLULAR LOCATION</scope>
</reference>
<reference key="14">
    <citation type="journal article" date="2013" name="J. Proteome Res.">
        <title>Toward a comprehensive characterization of a human cancer cell phosphoproteome.</title>
        <authorList>
            <person name="Zhou H."/>
            <person name="Di Palma S."/>
            <person name="Preisinger C."/>
            <person name="Peng M."/>
            <person name="Polat A.N."/>
            <person name="Heck A.J."/>
            <person name="Mohammed S."/>
        </authorList>
    </citation>
    <scope>PHOSPHORYLATION [LARGE SCALE ANALYSIS] AT SER-77; SER-87; SER-263; SER-549; SER-776; SER-1278; SER-1385; SER-1514; SER-1523; SER-1791 AND SER-1808</scope>
    <scope>IDENTIFICATION BY MASS SPECTROMETRY [LARGE SCALE ANALYSIS]</scope>
    <source>
        <tissue>Cervix carcinoma</tissue>
        <tissue>Erythroleukemia</tissue>
    </source>
</reference>
<reference key="15">
    <citation type="journal article" date="2021" name="Chromosome Res.">
        <title>SOGA1 and SOGA2/MTCL1 are CLASP-interacting proteins required for faithful chromosome segregation in human cells.</title>
        <authorList>
            <person name="Ferreira L.T."/>
            <person name="Logarinho E."/>
            <person name="Macedo J.C."/>
            <person name="Maia A.R.R."/>
            <person name="Maiato H."/>
        </authorList>
    </citation>
    <scope>FUNCTION</scope>
    <scope>SUBCELLULAR LOCATION</scope>
    <scope>INTERACTION WITH CLASP1 AND CLASP2</scope>
    <scope>PHOSPHORYLATION</scope>
</reference>
<gene>
    <name type="primary">MTCL1</name>
    <name type="synonym">CCDC165</name>
    <name type="synonym">KIAA0802</name>
    <name type="synonym">SOGA2</name>
</gene>
<organism>
    <name type="scientific">Homo sapiens</name>
    <name type="common">Human</name>
    <dbReference type="NCBI Taxonomy" id="9606"/>
    <lineage>
        <taxon>Eukaryota</taxon>
        <taxon>Metazoa</taxon>
        <taxon>Chordata</taxon>
        <taxon>Craniata</taxon>
        <taxon>Vertebrata</taxon>
        <taxon>Euteleostomi</taxon>
        <taxon>Mammalia</taxon>
        <taxon>Eutheria</taxon>
        <taxon>Euarchontoglires</taxon>
        <taxon>Primates</taxon>
        <taxon>Haplorrhini</taxon>
        <taxon>Catarrhini</taxon>
        <taxon>Hominidae</taxon>
        <taxon>Homo</taxon>
    </lineage>
</organism>
<evidence type="ECO:0000250" key="1"/>
<evidence type="ECO:0000250" key="2">
    <source>
        <dbReference type="UniProtKB" id="Q3UHU5"/>
    </source>
</evidence>
<evidence type="ECO:0000255" key="3"/>
<evidence type="ECO:0000256" key="4">
    <source>
        <dbReference type="SAM" id="MobiDB-lite"/>
    </source>
</evidence>
<evidence type="ECO:0000269" key="5">
    <source>
    </source>
</evidence>
<evidence type="ECO:0000269" key="6">
    <source>
    </source>
</evidence>
<evidence type="ECO:0000269" key="7">
    <source>
    </source>
</evidence>
<evidence type="ECO:0000269" key="8">
    <source>
    </source>
</evidence>
<evidence type="ECO:0000303" key="9">
    <source>
    </source>
</evidence>
<evidence type="ECO:0000303" key="10">
    <source>
    </source>
</evidence>
<evidence type="ECO:0000303" key="11">
    <source>
    </source>
</evidence>
<evidence type="ECO:0000305" key="12"/>
<evidence type="ECO:0007744" key="13">
    <source>
    </source>
</evidence>
<evidence type="ECO:0007744" key="14">
    <source>
    </source>
</evidence>
<evidence type="ECO:0007744" key="15">
    <source>
    </source>
</evidence>
<evidence type="ECO:0007744" key="16">
    <source>
    </source>
</evidence>
<evidence type="ECO:0007744" key="17">
    <source>
    </source>
</evidence>
<evidence type="ECO:0007744" key="18">
    <source>
    </source>
</evidence>
<protein>
    <recommendedName>
        <fullName>Microtubule cross-linking factor 1</fullName>
    </recommendedName>
    <alternativeName>
        <fullName>Coiled-coil domain-containing protein 165</fullName>
    </alternativeName>
    <alternativeName>
        <fullName>PAR-1-interacting protein</fullName>
    </alternativeName>
    <alternativeName>
        <fullName>SOGA family member 2</fullName>
    </alternativeName>
</protein>
<name>MTCL1_HUMAN</name>
<dbReference type="EMBL" id="AB018345">
    <property type="protein sequence ID" value="BAA34522.2"/>
    <property type="status" value="ALT_INIT"/>
    <property type="molecule type" value="mRNA"/>
</dbReference>
<dbReference type="EMBL" id="AK131528">
    <property type="protein sequence ID" value="BAD18666.1"/>
    <property type="molecule type" value="mRNA"/>
</dbReference>
<dbReference type="EMBL" id="AP000864">
    <property type="status" value="NOT_ANNOTATED_CDS"/>
    <property type="molecule type" value="Genomic_DNA"/>
</dbReference>
<dbReference type="EMBL" id="AP001531">
    <property type="status" value="NOT_ANNOTATED_CDS"/>
    <property type="molecule type" value="Genomic_DNA"/>
</dbReference>
<dbReference type="EMBL" id="BC040542">
    <property type="protein sequence ID" value="AAH40542.2"/>
    <property type="molecule type" value="mRNA"/>
</dbReference>
<dbReference type="CCDS" id="CCDS11841.1">
    <molecule id="Q9Y4B5-3"/>
</dbReference>
<dbReference type="CCDS" id="CCDS92432.1">
    <molecule id="Q9Y4B5-1"/>
</dbReference>
<dbReference type="CCDS" id="CCDS92434.1">
    <molecule id="Q9Y4B5-2"/>
</dbReference>
<dbReference type="RefSeq" id="NP_001365134.1">
    <molecule id="Q9Y4B5-1"/>
    <property type="nucleotide sequence ID" value="NM_001378205.1"/>
</dbReference>
<dbReference type="RefSeq" id="NP_001382149.1">
    <molecule id="Q9Y4B5-2"/>
    <property type="nucleotide sequence ID" value="NM_001395220.1"/>
</dbReference>
<dbReference type="RefSeq" id="NP_056025.2">
    <molecule id="Q9Y4B5-3"/>
    <property type="nucleotide sequence ID" value="NM_015210.4"/>
</dbReference>
<dbReference type="RefSeq" id="XP_005258156.1">
    <property type="nucleotide sequence ID" value="XM_005258099.4"/>
</dbReference>
<dbReference type="RefSeq" id="XP_047293356.1">
    <molecule id="Q9Y4B5-1"/>
    <property type="nucleotide sequence ID" value="XM_047437400.1"/>
</dbReference>
<dbReference type="SMR" id="Q9Y4B5"/>
<dbReference type="BioGRID" id="116859">
    <property type="interactions" value="107"/>
</dbReference>
<dbReference type="FunCoup" id="Q9Y4B5">
    <property type="interactions" value="863"/>
</dbReference>
<dbReference type="IntAct" id="Q9Y4B5">
    <property type="interactions" value="58"/>
</dbReference>
<dbReference type="MINT" id="Q9Y4B5"/>
<dbReference type="STRING" id="9606.ENSP00000352927"/>
<dbReference type="GlyCosmos" id="Q9Y4B5">
    <property type="glycosylation" value="2 sites, 1 glycan"/>
</dbReference>
<dbReference type="GlyGen" id="Q9Y4B5">
    <property type="glycosylation" value="8 sites, 1 O-linked glycan (6 sites)"/>
</dbReference>
<dbReference type="iPTMnet" id="Q9Y4B5"/>
<dbReference type="PhosphoSitePlus" id="Q9Y4B5"/>
<dbReference type="BioMuta" id="MTCL1"/>
<dbReference type="DMDM" id="384872711"/>
<dbReference type="jPOST" id="Q9Y4B5"/>
<dbReference type="MassIVE" id="Q9Y4B5"/>
<dbReference type="PaxDb" id="9606-ENSP00000352927"/>
<dbReference type="PeptideAtlas" id="Q9Y4B5"/>
<dbReference type="ProteomicsDB" id="86147">
    <molecule id="Q9Y4B5-1"/>
</dbReference>
<dbReference type="ProteomicsDB" id="86148">
    <molecule id="Q9Y4B5-2"/>
</dbReference>
<dbReference type="ProteomicsDB" id="86149">
    <molecule id="Q9Y4B5-3"/>
</dbReference>
<dbReference type="ProteomicsDB" id="86150">
    <molecule id="Q9Y4B5-4"/>
</dbReference>
<dbReference type="Pumba" id="Q9Y4B5"/>
<dbReference type="Antibodypedia" id="48434">
    <property type="antibodies" value="29 antibodies from 15 providers"/>
</dbReference>
<dbReference type="DNASU" id="23255"/>
<dbReference type="Ensembl" id="ENST00000306329.16">
    <molecule id="Q9Y4B5-1"/>
    <property type="protein sequence ID" value="ENSP00000305027.11"/>
    <property type="gene ID" value="ENSG00000168502.18"/>
</dbReference>
<dbReference type="Ensembl" id="ENST00000359865.7">
    <molecule id="Q9Y4B5-3"/>
    <property type="protein sequence ID" value="ENSP00000352927.3"/>
    <property type="gene ID" value="ENSG00000168502.18"/>
</dbReference>
<dbReference type="Ensembl" id="ENST00000517570.5">
    <molecule id="Q9Y4B5-2"/>
    <property type="protein sequence ID" value="ENSP00000429556.1"/>
    <property type="gene ID" value="ENSG00000168502.18"/>
</dbReference>
<dbReference type="GeneID" id="23255"/>
<dbReference type="KEGG" id="hsa:23255"/>
<dbReference type="UCSC" id="uc002knq.2">
    <molecule id="Q9Y4B5-1"/>
    <property type="organism name" value="human"/>
</dbReference>
<dbReference type="AGR" id="HGNC:29121"/>
<dbReference type="CTD" id="23255"/>
<dbReference type="DisGeNET" id="23255"/>
<dbReference type="GeneCards" id="MTCL1"/>
<dbReference type="HGNC" id="HGNC:29121">
    <property type="gene designation" value="MTCL1"/>
</dbReference>
<dbReference type="HPA" id="ENSG00000168502">
    <property type="expression patterns" value="Group enriched (brain, retina)"/>
</dbReference>
<dbReference type="MIM" id="615766">
    <property type="type" value="gene"/>
</dbReference>
<dbReference type="neXtProt" id="NX_Q9Y4B5"/>
<dbReference type="OpenTargets" id="ENSG00000168502"/>
<dbReference type="PharmGKB" id="PA128394616"/>
<dbReference type="VEuPathDB" id="HostDB:ENSG00000168502"/>
<dbReference type="eggNOG" id="KOG4787">
    <property type="taxonomic scope" value="Eukaryota"/>
</dbReference>
<dbReference type="GeneTree" id="ENSGT00950000182982"/>
<dbReference type="HOGENOM" id="CLU_002595_0_0_1"/>
<dbReference type="InParanoid" id="Q9Y4B5"/>
<dbReference type="OMA" id="DHANKNC"/>
<dbReference type="OrthoDB" id="10036174at2759"/>
<dbReference type="PAN-GO" id="Q9Y4B5">
    <property type="GO annotations" value="8 GO annotations based on evolutionary models"/>
</dbReference>
<dbReference type="PhylomeDB" id="Q9Y4B5"/>
<dbReference type="TreeFam" id="TF331853"/>
<dbReference type="PathwayCommons" id="Q9Y4B5"/>
<dbReference type="SignaLink" id="Q9Y4B5"/>
<dbReference type="BioGRID-ORCS" id="23255">
    <property type="hits" value="9 hits in 1152 CRISPR screens"/>
</dbReference>
<dbReference type="ChiTaRS" id="MTCL1">
    <property type="organism name" value="human"/>
</dbReference>
<dbReference type="GeneWiki" id="KIAA0802"/>
<dbReference type="GenomeRNAi" id="23255"/>
<dbReference type="Pharos" id="Q9Y4B5">
    <property type="development level" value="Tbio"/>
</dbReference>
<dbReference type="PRO" id="PR:Q9Y4B5"/>
<dbReference type="Proteomes" id="UP000005640">
    <property type="component" value="Chromosome 18"/>
</dbReference>
<dbReference type="RNAct" id="Q9Y4B5">
    <property type="molecule type" value="protein"/>
</dbReference>
<dbReference type="Bgee" id="ENSG00000168502">
    <property type="expression patterns" value="Expressed in cerebellar cortex and 158 other cell types or tissues"/>
</dbReference>
<dbReference type="ExpressionAtlas" id="Q9Y4B5">
    <property type="expression patterns" value="baseline and differential"/>
</dbReference>
<dbReference type="GO" id="GO:0016324">
    <property type="term" value="C:apical plasma membrane"/>
    <property type="evidence" value="ECO:0007669"/>
    <property type="project" value="UniProtKB-SubCell"/>
</dbReference>
<dbReference type="GO" id="GO:0016327">
    <property type="term" value="C:apicolateral plasma membrane"/>
    <property type="evidence" value="ECO:0000250"/>
    <property type="project" value="UniProtKB"/>
</dbReference>
<dbReference type="GO" id="GO:0005737">
    <property type="term" value="C:cytoplasm"/>
    <property type="evidence" value="ECO:0007669"/>
    <property type="project" value="UniProtKB-KW"/>
</dbReference>
<dbReference type="GO" id="GO:0005856">
    <property type="term" value="C:cytoskeleton"/>
    <property type="evidence" value="ECO:0000314"/>
    <property type="project" value="UniProtKB"/>
</dbReference>
<dbReference type="GO" id="GO:0005615">
    <property type="term" value="C:extracellular space"/>
    <property type="evidence" value="ECO:0007669"/>
    <property type="project" value="InterPro"/>
</dbReference>
<dbReference type="GO" id="GO:0000776">
    <property type="term" value="C:kinetochore"/>
    <property type="evidence" value="ECO:0000314"/>
    <property type="project" value="UniProtKB"/>
</dbReference>
<dbReference type="GO" id="GO:0016328">
    <property type="term" value="C:lateral plasma membrane"/>
    <property type="evidence" value="ECO:0000250"/>
    <property type="project" value="UniProtKB"/>
</dbReference>
<dbReference type="GO" id="GO:0097427">
    <property type="term" value="C:microtubule bundle"/>
    <property type="evidence" value="ECO:0000250"/>
    <property type="project" value="UniProtKB"/>
</dbReference>
<dbReference type="GO" id="GO:0030496">
    <property type="term" value="C:midbody"/>
    <property type="evidence" value="ECO:0000314"/>
    <property type="project" value="UniProtKB"/>
</dbReference>
<dbReference type="GO" id="GO:0005876">
    <property type="term" value="C:spindle microtubule"/>
    <property type="evidence" value="ECO:0000314"/>
    <property type="project" value="UniProtKB"/>
</dbReference>
<dbReference type="GO" id="GO:0000922">
    <property type="term" value="C:spindle pole"/>
    <property type="evidence" value="ECO:0000314"/>
    <property type="project" value="UniProtKB"/>
</dbReference>
<dbReference type="GO" id="GO:0008017">
    <property type="term" value="F:microtubule binding"/>
    <property type="evidence" value="ECO:0000314"/>
    <property type="project" value="UniProtKB"/>
</dbReference>
<dbReference type="GO" id="GO:0042803">
    <property type="term" value="F:protein homodimerization activity"/>
    <property type="evidence" value="ECO:0000250"/>
    <property type="project" value="UniProtKB"/>
</dbReference>
<dbReference type="GO" id="GO:0003723">
    <property type="term" value="F:RNA binding"/>
    <property type="evidence" value="ECO:0007005"/>
    <property type="project" value="UniProtKB"/>
</dbReference>
<dbReference type="GO" id="GO:0051301">
    <property type="term" value="P:cell division"/>
    <property type="evidence" value="ECO:0007669"/>
    <property type="project" value="UniProtKB-KW"/>
</dbReference>
<dbReference type="GO" id="GO:0007059">
    <property type="term" value="P:chromosome segregation"/>
    <property type="evidence" value="ECO:0000315"/>
    <property type="project" value="UniProtKB"/>
</dbReference>
<dbReference type="GO" id="GO:0045197">
    <property type="term" value="P:establishment or maintenance of epithelial cell apical/basal polarity"/>
    <property type="evidence" value="ECO:0000250"/>
    <property type="project" value="UniProtKB"/>
</dbReference>
<dbReference type="GO" id="GO:0001578">
    <property type="term" value="P:microtubule bundle formation"/>
    <property type="evidence" value="ECO:0000250"/>
    <property type="project" value="UniProtKB"/>
</dbReference>
<dbReference type="GO" id="GO:0090314">
    <property type="term" value="P:positive regulation of protein targeting to membrane"/>
    <property type="evidence" value="ECO:0000250"/>
    <property type="project" value="UniProtKB"/>
</dbReference>
<dbReference type="GO" id="GO:0010506">
    <property type="term" value="P:regulation of autophagy"/>
    <property type="evidence" value="ECO:0007669"/>
    <property type="project" value="InterPro"/>
</dbReference>
<dbReference type="InterPro" id="IPR049885">
    <property type="entry name" value="MTCL1-3"/>
</dbReference>
<dbReference type="InterPro" id="IPR027882">
    <property type="entry name" value="SOGA1/2-like_CC"/>
</dbReference>
<dbReference type="InterPro" id="IPR027881">
    <property type="entry name" value="SOGA_CC"/>
</dbReference>
<dbReference type="PANTHER" id="PTHR15742">
    <property type="entry name" value="GIRDIN"/>
    <property type="match status" value="1"/>
</dbReference>
<dbReference type="PANTHER" id="PTHR15742:SF3">
    <property type="entry name" value="MICROTUBULE CROSS-LINKING FACTOR 1"/>
    <property type="match status" value="1"/>
</dbReference>
<dbReference type="Pfam" id="PF11365">
    <property type="entry name" value="SOGA"/>
    <property type="match status" value="2"/>
</dbReference>
<dbReference type="Pfam" id="PF14818">
    <property type="entry name" value="SOGA1-2-like_CC"/>
    <property type="match status" value="1"/>
</dbReference>
<keyword id="KW-0025">Alternative splicing</keyword>
<keyword id="KW-0131">Cell cycle</keyword>
<keyword id="KW-0132">Cell division</keyword>
<keyword id="KW-1003">Cell membrane</keyword>
<keyword id="KW-0175">Coiled coil</keyword>
<keyword id="KW-0963">Cytoplasm</keyword>
<keyword id="KW-0206">Cytoskeleton</keyword>
<keyword id="KW-0472">Membrane</keyword>
<keyword id="KW-0498">Mitosis</keyword>
<keyword id="KW-0597">Phosphoprotein</keyword>
<keyword id="KW-1267">Proteomics identification</keyword>
<keyword id="KW-1185">Reference proteome</keyword>
<sequence>METLNGPAGGGAPDAKLQPPGQHHRHHHLHPVAERRRLHRAPSPARPFLKDLHARPAAPGPAVPSSGRAPAPAAPRSPNLAGKAPPSPGSLAAPGRLSRRSGGVPGAKDKPPPGAGARAAGGAKAALGSRRAARVAPAEPLSRAGKPPGAEPPSAAAKGRKAKRGSRAPPARTVGPPTPAARIPAVTLAVTSVAGSPARCSRISHTDSSSDLSDCPSEPLSDEQRLLPAASSDAESGTGSSDREPPRGAPTPSPAARGAPPGSPEPPALLAAPLAAGACPGGRSIPSGVSGGFAGPGVAEDVRGRSPPERPVPGTPKEPSLGEQSRLVPAAEEEELLREMEELRSENDYLKDELDELRAEMEEMRDSYLEEDVYQLQELRRELDRANKNCRILQYRLRKAEQKSLKVAETGQVDGELIRSLEQDLKVAKDVSVRLHHELKTVEEKRAKAEDENETLRQQMIEVEISKQALQNELERLKESSLKRRSTREMYKEKKTFNQDDSADLRCQLQFAKEEAFLMRKKMAKLGREKDELEQELQKYKSLYGDVDSPLPTGEAGGPPSTREAELKLRLKLVEEEANILGRKIVELEVENRGLKAEMEDMRGQQEREGPGRDHAPSIPTSPFGDSLESSTELRRHLQFVEEEAELLRRSISEIEDHNRQLTHELSKFKFEPPREPGWLGEGASPGAGGGAPLQEELKSARLQISELSGKVLKLQHENHALLSNIQRCDLAAHLGLRAPSPRDSDAESDAGKKESDGEESRLPQPKREGPVGGESDSEEMFEKTSGFGSGKPSEASEPCPTELLKAREDSEYLVTLKHEAQRLERTVERLITDTDSFLHDAGLRGGAPLPGPGLQGEEEQGEGDQQEPQLLGTINAKMKAFKKELQAFLEQVNRIGDGLSPLPHLTESSSFLSTVTSVSRDSPIGNLGKELGPDLQSRLKEQLEWQLGPARGDERESLRLRAARELHRRADGDTGSHGLGGQTCFSLEMEEEHLYALRWKELEMHSLALQNTLHERTWSDEKNLMQQELRSLKQNIFLFYVKLRWLLKHWRQGKQMEEEGEEFTEGEHPETLSRLGELGVQGGHQADGPDHDSDRGCGFPVGEHSPHSRVQIGDHSLRLQTADRGQPHKQVVENQQLFSAFKALLEDFRAELREDERARLRLQQQYASDKAAWDVEWAVLKCRLEQLEEKTENKLGELGSSAESKGALKKEREVHQKLLADSHSLVMDLRWQIHHSEKNWNREKVELLDRLDRDRQEWERQKKEFLWRIEQLQKENSPRRGGSFLCDQKDGNVRPFPHQGSLRMPRPVAMWPCADADSIPFEDRPLSKLKESDRCSASENLYLDALSLDDEPEEPPAHRPEREFRNRLPEEEENHKGNLQRAVSVSSMSEFQRLMDISPFLPEKGLPSTSSKEDVTPPLSPDDLKYIEEFNKSWDYTPNRGHNGGGPDLWADRTEVGRAGHEDSTEPFPDSSWYLTTSVTMTTDTMTSPEHCQKQPLRSHVLTEQSGLRVLHSPPAVRRVDSITAAGGEGPFPTSRARGSPGDTKGGPPEPMLSRWPCTSPRHSRDYVEGARRPLDSPLCTSLGFASPLHSLEMSKNLSDDMKEVAFSVRNAICSGPGELQVKDMACQTNGSRTMGTQTVQTISVGLQTEALRGSGVTSSPHKCLTPKAGGGATPVSSPSRSLRSRQVAPAIEKVQAKFERTCCSPKYGSPKLQRKPLPKADQPNNRTSPGMAQKGYSESAWARSTTTRESPVHTTINDGLSSLFNIIDHSPVVQDPFQKGLRAGSRSRSAEPRPELGPGQETGTNSRGRSPSPIGVGSEMCREEGGEGTPVKQDLSAPPGYTLTENVARILNKKLLEHALKEERRQAAHGPPGLHSDSHSLGDTAEPGPMENQTVLLTAPWGL</sequence>
<comment type="function">
    <text evidence="6 7">Microtubule-associated factor involved in the late phase of epithelial polarization and microtubule dynamics regulation (PubMed:23902687). Plays a role in the development and maintenance of non-centrosomal microtubule bundles at the lateral membrane in polarized epithelial cells (PubMed:23902687). Required for faithful chromosome segregation during mitosis (PubMed:33587225).</text>
</comment>
<comment type="subunit">
    <text evidence="6">Homodimer. Associates (via N- and C-terminus domains) with microtubule filaments.</text>
</comment>
<comment type="subunit">
    <molecule>Isoform 2</molecule>
    <text evidence="6">Interacts with MARK2; the interaction is direct.</text>
</comment>
<comment type="subcellular location">
    <subcellularLocation>
        <location evidence="2">Lateral cell membrane</location>
    </subcellularLocation>
    <subcellularLocation>
        <location evidence="2">Apical cell membrane</location>
    </subcellularLocation>
    <subcellularLocation>
        <location evidence="6 7">Cytoplasm</location>
        <location evidence="6 7">Cytoskeleton</location>
        <location evidence="6 7">Spindle pole</location>
    </subcellularLocation>
    <subcellularLocation>
        <location evidence="6 7">Midbody</location>
    </subcellularLocation>
    <subcellularLocation>
        <location evidence="6 7">Cytoplasm</location>
        <location evidence="6 7">Cytoskeleton</location>
    </subcellularLocation>
    <text evidence="2 6">Colocalized with microtubules at the base of cilia. Gradually accumulates on the apicobasal microtubule bundles during epithelial cell polarization (By similarity). Colocalized with the apicobasal microtubule bundles running beneath the lateral membrane. Colocalized with microtubule bundles in the spindle pole in mitotic cells and in the midbodies at the end of cytokinesis.</text>
</comment>
<comment type="alternative products">
    <event type="alternative splicing"/>
    <isoform>
        <id>Q9Y4B5-1</id>
        <name>1</name>
        <sequence type="displayed"/>
    </isoform>
    <isoform>
        <id>Q9Y4B5-2</id>
        <name>2</name>
        <sequence type="described" ref="VSP_023550"/>
    </isoform>
    <isoform>
        <id>Q9Y4B5-3</id>
        <name>3</name>
        <sequence type="described" ref="VSP_023550 VSP_023551"/>
    </isoform>
    <isoform>
        <id>Q9Y4B5-4</id>
        <name>4</name>
        <sequence type="described" ref="VSP_023549 VSP_023552 VSP_023553 VSP_023554"/>
    </isoform>
</comment>
<comment type="PTM">
    <text evidence="7">Phosphorylated during mitosis in a CDK1-dependent manner.</text>
</comment>
<comment type="similarity">
    <text evidence="12">Belongs to the SOGA family.</text>
</comment>
<comment type="sequence caution" evidence="12">
    <conflict type="erroneous initiation">
        <sequence resource="EMBL-CDS" id="BAA34522"/>
    </conflict>
    <text>Extended N-terminus.</text>
</comment>
<proteinExistence type="evidence at protein level"/>